<sequence>MSPTLQLACDLISRASVTPEDAGCQALMTERLRAIGFHIESLRFDDVDNFWAVRGASGPILCFAGHTDVVPEGDPAKWQSPPYEPTITDGLLYGRGAADMKGSLAAMVTACEAFVAEHPNHTGRIAFLITSDEEGIAANGTVKVVEWLEARGEKVTWCLVGEPSSTQSVGDVIKNGRRGSLGCKLTVKGKQGHVAYPHLAKNPIHLVAPALADLAAEQWDEGNDFFPATSFQVSNFNAGTGATNVIPGEAAIVFNFRFSTESTADELKQRTEAILAKHGLDYDIHWHLSGEPFLTPAGALVDAAVTAIRAECGAEPELSTSGGTSDGRFIAPTGAQVLELGPVNATIHQINECVNVADLDKLSATYQRILKELLA</sequence>
<protein>
    <recommendedName>
        <fullName evidence="1">Succinyl-diaminopimelate desuccinylase</fullName>
        <shortName evidence="1">SDAP desuccinylase</shortName>
        <ecNumber evidence="1">3.5.1.18</ecNumber>
    </recommendedName>
    <alternativeName>
        <fullName evidence="1">N-succinyl-LL-2,6-diaminoheptanedioate amidohydrolase</fullName>
    </alternativeName>
</protein>
<dbReference type="EC" id="3.5.1.18" evidence="1"/>
<dbReference type="EMBL" id="CP001614">
    <property type="protein sequence ID" value="ACR11342.1"/>
    <property type="molecule type" value="Genomic_DNA"/>
</dbReference>
<dbReference type="RefSeq" id="WP_015817454.1">
    <property type="nucleotide sequence ID" value="NC_012997.1"/>
</dbReference>
<dbReference type="SMR" id="C5BQE9"/>
<dbReference type="STRING" id="377629.TERTU_0998"/>
<dbReference type="KEGG" id="ttu:TERTU_0998"/>
<dbReference type="eggNOG" id="COG0624">
    <property type="taxonomic scope" value="Bacteria"/>
</dbReference>
<dbReference type="HOGENOM" id="CLU_021802_4_0_6"/>
<dbReference type="OrthoDB" id="9809784at2"/>
<dbReference type="UniPathway" id="UPA00034">
    <property type="reaction ID" value="UER00021"/>
</dbReference>
<dbReference type="Proteomes" id="UP000009080">
    <property type="component" value="Chromosome"/>
</dbReference>
<dbReference type="GO" id="GO:0008777">
    <property type="term" value="F:acetylornithine deacetylase activity"/>
    <property type="evidence" value="ECO:0007669"/>
    <property type="project" value="TreeGrafter"/>
</dbReference>
<dbReference type="GO" id="GO:0050897">
    <property type="term" value="F:cobalt ion binding"/>
    <property type="evidence" value="ECO:0007669"/>
    <property type="project" value="UniProtKB-UniRule"/>
</dbReference>
<dbReference type="GO" id="GO:0009014">
    <property type="term" value="F:succinyl-diaminopimelate desuccinylase activity"/>
    <property type="evidence" value="ECO:0007669"/>
    <property type="project" value="UniProtKB-UniRule"/>
</dbReference>
<dbReference type="GO" id="GO:0008270">
    <property type="term" value="F:zinc ion binding"/>
    <property type="evidence" value="ECO:0007669"/>
    <property type="project" value="UniProtKB-UniRule"/>
</dbReference>
<dbReference type="GO" id="GO:0019877">
    <property type="term" value="P:diaminopimelate biosynthetic process"/>
    <property type="evidence" value="ECO:0007669"/>
    <property type="project" value="UniProtKB-UniRule"/>
</dbReference>
<dbReference type="GO" id="GO:0006526">
    <property type="term" value="P:L-arginine biosynthetic process"/>
    <property type="evidence" value="ECO:0007669"/>
    <property type="project" value="TreeGrafter"/>
</dbReference>
<dbReference type="GO" id="GO:0009089">
    <property type="term" value="P:lysine biosynthetic process via diaminopimelate"/>
    <property type="evidence" value="ECO:0007669"/>
    <property type="project" value="UniProtKB-UniRule"/>
</dbReference>
<dbReference type="CDD" id="cd03891">
    <property type="entry name" value="M20_DapE_proteobac"/>
    <property type="match status" value="1"/>
</dbReference>
<dbReference type="FunFam" id="3.30.70.360:FF:000011">
    <property type="entry name" value="Succinyl-diaminopimelate desuccinylase"/>
    <property type="match status" value="1"/>
</dbReference>
<dbReference type="FunFam" id="3.40.630.10:FF:000005">
    <property type="entry name" value="Succinyl-diaminopimelate desuccinylase"/>
    <property type="match status" value="1"/>
</dbReference>
<dbReference type="Gene3D" id="3.40.630.10">
    <property type="entry name" value="Zn peptidases"/>
    <property type="match status" value="2"/>
</dbReference>
<dbReference type="HAMAP" id="MF_01690">
    <property type="entry name" value="DapE"/>
    <property type="match status" value="1"/>
</dbReference>
<dbReference type="InterPro" id="IPR036264">
    <property type="entry name" value="Bact_exopeptidase_dim_dom"/>
</dbReference>
<dbReference type="InterPro" id="IPR005941">
    <property type="entry name" value="DapE_proteobac"/>
</dbReference>
<dbReference type="InterPro" id="IPR002933">
    <property type="entry name" value="Peptidase_M20"/>
</dbReference>
<dbReference type="InterPro" id="IPR011650">
    <property type="entry name" value="Peptidase_M20_dimer"/>
</dbReference>
<dbReference type="InterPro" id="IPR050072">
    <property type="entry name" value="Peptidase_M20A"/>
</dbReference>
<dbReference type="NCBIfam" id="TIGR01246">
    <property type="entry name" value="dapE_proteo"/>
    <property type="match status" value="1"/>
</dbReference>
<dbReference type="NCBIfam" id="NF009557">
    <property type="entry name" value="PRK13009.1"/>
    <property type="match status" value="1"/>
</dbReference>
<dbReference type="PANTHER" id="PTHR43808">
    <property type="entry name" value="ACETYLORNITHINE DEACETYLASE"/>
    <property type="match status" value="1"/>
</dbReference>
<dbReference type="PANTHER" id="PTHR43808:SF31">
    <property type="entry name" value="N-ACETYL-L-CITRULLINE DEACETYLASE"/>
    <property type="match status" value="1"/>
</dbReference>
<dbReference type="Pfam" id="PF07687">
    <property type="entry name" value="M20_dimer"/>
    <property type="match status" value="1"/>
</dbReference>
<dbReference type="Pfam" id="PF01546">
    <property type="entry name" value="Peptidase_M20"/>
    <property type="match status" value="1"/>
</dbReference>
<dbReference type="SUPFAM" id="SSF55031">
    <property type="entry name" value="Bacterial exopeptidase dimerisation domain"/>
    <property type="match status" value="1"/>
</dbReference>
<dbReference type="SUPFAM" id="SSF53187">
    <property type="entry name" value="Zn-dependent exopeptidases"/>
    <property type="match status" value="1"/>
</dbReference>
<dbReference type="PROSITE" id="PS00759">
    <property type="entry name" value="ARGE_DAPE_CPG2_2"/>
    <property type="match status" value="1"/>
</dbReference>
<organism>
    <name type="scientific">Teredinibacter turnerae (strain ATCC 39867 / T7901)</name>
    <dbReference type="NCBI Taxonomy" id="377629"/>
    <lineage>
        <taxon>Bacteria</taxon>
        <taxon>Pseudomonadati</taxon>
        <taxon>Pseudomonadota</taxon>
        <taxon>Gammaproteobacteria</taxon>
        <taxon>Cellvibrionales</taxon>
        <taxon>Cellvibrionaceae</taxon>
        <taxon>Teredinibacter</taxon>
    </lineage>
</organism>
<name>DAPE_TERTT</name>
<comment type="function">
    <text evidence="1">Catalyzes the hydrolysis of N-succinyl-L,L-diaminopimelic acid (SDAP), forming succinate and LL-2,6-diaminopimelate (DAP), an intermediate involved in the bacterial biosynthesis of lysine and meso-diaminopimelic acid, an essential component of bacterial cell walls.</text>
</comment>
<comment type="catalytic activity">
    <reaction evidence="1">
        <text>N-succinyl-(2S,6S)-2,6-diaminopimelate + H2O = (2S,6S)-2,6-diaminopimelate + succinate</text>
        <dbReference type="Rhea" id="RHEA:22608"/>
        <dbReference type="ChEBI" id="CHEBI:15377"/>
        <dbReference type="ChEBI" id="CHEBI:30031"/>
        <dbReference type="ChEBI" id="CHEBI:57609"/>
        <dbReference type="ChEBI" id="CHEBI:58087"/>
        <dbReference type="EC" id="3.5.1.18"/>
    </reaction>
</comment>
<comment type="cofactor">
    <cofactor evidence="1">
        <name>Zn(2+)</name>
        <dbReference type="ChEBI" id="CHEBI:29105"/>
    </cofactor>
    <cofactor evidence="1">
        <name>Co(2+)</name>
        <dbReference type="ChEBI" id="CHEBI:48828"/>
    </cofactor>
    <text evidence="1">Binds 2 Zn(2+) or Co(2+) ions per subunit.</text>
</comment>
<comment type="pathway">
    <text evidence="1">Amino-acid biosynthesis; L-lysine biosynthesis via DAP pathway; LL-2,6-diaminopimelate from (S)-tetrahydrodipicolinate (succinylase route): step 3/3.</text>
</comment>
<comment type="subunit">
    <text evidence="1">Homodimer.</text>
</comment>
<comment type="similarity">
    <text evidence="1">Belongs to the peptidase M20A family. DapE subfamily.</text>
</comment>
<evidence type="ECO:0000255" key="1">
    <source>
        <dbReference type="HAMAP-Rule" id="MF_01690"/>
    </source>
</evidence>
<reference key="1">
    <citation type="journal article" date="2009" name="PLoS ONE">
        <title>The complete genome of Teredinibacter turnerae T7901: an intracellular endosymbiont of marine wood-boring bivalves (shipworms).</title>
        <authorList>
            <person name="Yang J.C."/>
            <person name="Madupu R."/>
            <person name="Durkin A.S."/>
            <person name="Ekborg N.A."/>
            <person name="Pedamallu C.S."/>
            <person name="Hostetler J.B."/>
            <person name="Radune D."/>
            <person name="Toms B.S."/>
            <person name="Henrissat B."/>
            <person name="Coutinho P.M."/>
            <person name="Schwarz S."/>
            <person name="Field L."/>
            <person name="Trindade-Silva A.E."/>
            <person name="Soares C.A.G."/>
            <person name="Elshahawi S."/>
            <person name="Hanora A."/>
            <person name="Schmidt E.W."/>
            <person name="Haygood M.G."/>
            <person name="Posfai J."/>
            <person name="Benner J."/>
            <person name="Madinger C."/>
            <person name="Nove J."/>
            <person name="Anton B."/>
            <person name="Chaudhary K."/>
            <person name="Foster J."/>
            <person name="Holman A."/>
            <person name="Kumar S."/>
            <person name="Lessard P.A."/>
            <person name="Luyten Y.A."/>
            <person name="Slatko B."/>
            <person name="Wood N."/>
            <person name="Wu B."/>
            <person name="Teplitski M."/>
            <person name="Mougous J.D."/>
            <person name="Ward N."/>
            <person name="Eisen J.A."/>
            <person name="Badger J.H."/>
            <person name="Distel D.L."/>
        </authorList>
    </citation>
    <scope>NUCLEOTIDE SEQUENCE [LARGE SCALE GENOMIC DNA]</scope>
    <source>
        <strain>ATCC 39867 / T7901</strain>
    </source>
</reference>
<feature type="chain" id="PRO_1000215924" description="Succinyl-diaminopimelate desuccinylase">
    <location>
        <begin position="1"/>
        <end position="375"/>
    </location>
</feature>
<feature type="active site" evidence="1">
    <location>
        <position position="68"/>
    </location>
</feature>
<feature type="active site" description="Proton acceptor" evidence="1">
    <location>
        <position position="133"/>
    </location>
</feature>
<feature type="binding site" evidence="1">
    <location>
        <position position="66"/>
    </location>
    <ligand>
        <name>Zn(2+)</name>
        <dbReference type="ChEBI" id="CHEBI:29105"/>
        <label>1</label>
    </ligand>
</feature>
<feature type="binding site" evidence="1">
    <location>
        <position position="99"/>
    </location>
    <ligand>
        <name>Zn(2+)</name>
        <dbReference type="ChEBI" id="CHEBI:29105"/>
        <label>1</label>
    </ligand>
</feature>
<feature type="binding site" evidence="1">
    <location>
        <position position="99"/>
    </location>
    <ligand>
        <name>Zn(2+)</name>
        <dbReference type="ChEBI" id="CHEBI:29105"/>
        <label>2</label>
    </ligand>
</feature>
<feature type="binding site" evidence="1">
    <location>
        <position position="134"/>
    </location>
    <ligand>
        <name>Zn(2+)</name>
        <dbReference type="ChEBI" id="CHEBI:29105"/>
        <label>2</label>
    </ligand>
</feature>
<feature type="binding site" evidence="1">
    <location>
        <position position="162"/>
    </location>
    <ligand>
        <name>Zn(2+)</name>
        <dbReference type="ChEBI" id="CHEBI:29105"/>
        <label>1</label>
    </ligand>
</feature>
<feature type="binding site" evidence="1">
    <location>
        <position position="348"/>
    </location>
    <ligand>
        <name>Zn(2+)</name>
        <dbReference type="ChEBI" id="CHEBI:29105"/>
        <label>2</label>
    </ligand>
</feature>
<accession>C5BQE9</accession>
<proteinExistence type="inferred from homology"/>
<keyword id="KW-0028">Amino-acid biosynthesis</keyword>
<keyword id="KW-0170">Cobalt</keyword>
<keyword id="KW-0220">Diaminopimelate biosynthesis</keyword>
<keyword id="KW-0378">Hydrolase</keyword>
<keyword id="KW-0457">Lysine biosynthesis</keyword>
<keyword id="KW-0479">Metal-binding</keyword>
<keyword id="KW-1185">Reference proteome</keyword>
<keyword id="KW-0862">Zinc</keyword>
<gene>
    <name evidence="1" type="primary">dapE</name>
    <name type="ordered locus">TERTU_0998</name>
</gene>